<evidence type="ECO:0000250" key="1"/>
<evidence type="ECO:0000255" key="2">
    <source>
        <dbReference type="HAMAP-Rule" id="MF_00116"/>
    </source>
</evidence>
<evidence type="ECO:0000256" key="3">
    <source>
        <dbReference type="SAM" id="MobiDB-lite"/>
    </source>
</evidence>
<gene>
    <name evidence="2" type="primary">dut</name>
    <name type="ordered locus">Mvan_2467</name>
</gene>
<feature type="chain" id="PRO_1000015490" description="Deoxyuridine 5'-triphosphate nucleotidohydrolase">
    <location>
        <begin position="1"/>
        <end position="154"/>
    </location>
</feature>
<feature type="region of interest" description="Disordered" evidence="3">
    <location>
        <begin position="135"/>
        <end position="154"/>
    </location>
</feature>
<feature type="compositionally biased region" description="Gly residues" evidence="3">
    <location>
        <begin position="144"/>
        <end position="154"/>
    </location>
</feature>
<feature type="binding site" evidence="2">
    <location>
        <begin position="64"/>
        <end position="66"/>
    </location>
    <ligand>
        <name>substrate</name>
    </ligand>
</feature>
<feature type="binding site" evidence="2">
    <location>
        <position position="77"/>
    </location>
    <ligand>
        <name>substrate</name>
    </ligand>
</feature>
<feature type="binding site" evidence="2">
    <location>
        <begin position="81"/>
        <end position="83"/>
    </location>
    <ligand>
        <name>substrate</name>
    </ligand>
</feature>
<feature type="binding site" evidence="2">
    <location>
        <position position="91"/>
    </location>
    <ligand>
        <name>substrate</name>
    </ligand>
</feature>
<protein>
    <recommendedName>
        <fullName evidence="2">Deoxyuridine 5'-triphosphate nucleotidohydrolase</fullName>
        <shortName evidence="2">dUTPase</shortName>
        <ecNumber evidence="2">3.6.1.23</ecNumber>
    </recommendedName>
    <alternativeName>
        <fullName evidence="2">dUTP pyrophosphatase</fullName>
    </alternativeName>
</protein>
<keyword id="KW-0378">Hydrolase</keyword>
<keyword id="KW-0460">Magnesium</keyword>
<keyword id="KW-0479">Metal-binding</keyword>
<keyword id="KW-0546">Nucleotide metabolism</keyword>
<reference key="1">
    <citation type="submission" date="2006-12" db="EMBL/GenBank/DDBJ databases">
        <title>Complete sequence of Mycobacterium vanbaalenii PYR-1.</title>
        <authorList>
            <consortium name="US DOE Joint Genome Institute"/>
            <person name="Copeland A."/>
            <person name="Lucas S."/>
            <person name="Lapidus A."/>
            <person name="Barry K."/>
            <person name="Detter J.C."/>
            <person name="Glavina del Rio T."/>
            <person name="Hammon N."/>
            <person name="Israni S."/>
            <person name="Dalin E."/>
            <person name="Tice H."/>
            <person name="Pitluck S."/>
            <person name="Singan V."/>
            <person name="Schmutz J."/>
            <person name="Larimer F."/>
            <person name="Land M."/>
            <person name="Hauser L."/>
            <person name="Kyrpides N."/>
            <person name="Anderson I.J."/>
            <person name="Miller C."/>
            <person name="Richardson P."/>
        </authorList>
    </citation>
    <scope>NUCLEOTIDE SEQUENCE [LARGE SCALE GENOMIC DNA]</scope>
    <source>
        <strain>DSM 7251 / JCM 13017 / BCRC 16820 / KCTC 9966 / NRRL B-24157 / PYR-1</strain>
    </source>
</reference>
<comment type="function">
    <text evidence="2">This enzyme is involved in nucleotide metabolism: it produces dUMP, the immediate precursor of thymidine nucleotides and it decreases the intracellular concentration of dUTP so that uracil cannot be incorporated into DNA.</text>
</comment>
<comment type="catalytic activity">
    <reaction evidence="2">
        <text>dUTP + H2O = dUMP + diphosphate + H(+)</text>
        <dbReference type="Rhea" id="RHEA:10248"/>
        <dbReference type="ChEBI" id="CHEBI:15377"/>
        <dbReference type="ChEBI" id="CHEBI:15378"/>
        <dbReference type="ChEBI" id="CHEBI:33019"/>
        <dbReference type="ChEBI" id="CHEBI:61555"/>
        <dbReference type="ChEBI" id="CHEBI:246422"/>
        <dbReference type="EC" id="3.6.1.23"/>
    </reaction>
</comment>
<comment type="cofactor">
    <cofactor evidence="2">
        <name>Mg(2+)</name>
        <dbReference type="ChEBI" id="CHEBI:18420"/>
    </cofactor>
</comment>
<comment type="pathway">
    <text evidence="2">Pyrimidine metabolism; dUMP biosynthesis; dUMP from dCTP (dUTP route): step 2/2.</text>
</comment>
<comment type="subunit">
    <text evidence="2">Homotrimer.</text>
</comment>
<comment type="miscellaneous">
    <text evidence="1">Each trimer binds three substrate molecules. The ligands are bound between subunits, and for each substrate molecule, residues from adjacent subunits contribute to the binding interactions (By similarity).</text>
</comment>
<comment type="similarity">
    <text evidence="2">Belongs to the dUTPase family.</text>
</comment>
<proteinExistence type="inferred from homology"/>
<sequence length="154" mass="15891">MPTTLAVVRLDRDLPLPSRAHDGDAGVDLYSAQDVELAPGQRALVPTGIAVAIPHGMVGLIHPRSGLAARVGLSIVNSPGTVDAGYRGEIKVSLINLDPAAPIAIRRGDRIAQLLVQRVELPELVEVTSFDEAGLADTTRGDGGHGSSGGHASL</sequence>
<name>DUT_MYCVP</name>
<dbReference type="EC" id="3.6.1.23" evidence="2"/>
<dbReference type="EMBL" id="CP000511">
    <property type="protein sequence ID" value="ABM13280.1"/>
    <property type="molecule type" value="Genomic_DNA"/>
</dbReference>
<dbReference type="RefSeq" id="WP_011779692.1">
    <property type="nucleotide sequence ID" value="NZ_JACKSD010000077.1"/>
</dbReference>
<dbReference type="SMR" id="A1T7Y0"/>
<dbReference type="STRING" id="350058.Mvan_2467"/>
<dbReference type="KEGG" id="mva:Mvan_2467"/>
<dbReference type="eggNOG" id="COG0756">
    <property type="taxonomic scope" value="Bacteria"/>
</dbReference>
<dbReference type="HOGENOM" id="CLU_068508_1_3_11"/>
<dbReference type="UniPathway" id="UPA00610">
    <property type="reaction ID" value="UER00666"/>
</dbReference>
<dbReference type="Proteomes" id="UP000009159">
    <property type="component" value="Chromosome"/>
</dbReference>
<dbReference type="GO" id="GO:0004170">
    <property type="term" value="F:dUTP diphosphatase activity"/>
    <property type="evidence" value="ECO:0007669"/>
    <property type="project" value="UniProtKB-UniRule"/>
</dbReference>
<dbReference type="GO" id="GO:0000287">
    <property type="term" value="F:magnesium ion binding"/>
    <property type="evidence" value="ECO:0007669"/>
    <property type="project" value="UniProtKB-UniRule"/>
</dbReference>
<dbReference type="GO" id="GO:0006226">
    <property type="term" value="P:dUMP biosynthetic process"/>
    <property type="evidence" value="ECO:0007669"/>
    <property type="project" value="UniProtKB-UniRule"/>
</dbReference>
<dbReference type="GO" id="GO:0046081">
    <property type="term" value="P:dUTP catabolic process"/>
    <property type="evidence" value="ECO:0007669"/>
    <property type="project" value="InterPro"/>
</dbReference>
<dbReference type="CDD" id="cd07557">
    <property type="entry name" value="trimeric_dUTPase"/>
    <property type="match status" value="1"/>
</dbReference>
<dbReference type="FunFam" id="2.70.40.10:FF:000008">
    <property type="entry name" value="Deoxyuridine 5'-triphosphate nucleotidohydrolase"/>
    <property type="match status" value="1"/>
</dbReference>
<dbReference type="Gene3D" id="2.70.40.10">
    <property type="match status" value="1"/>
</dbReference>
<dbReference type="HAMAP" id="MF_00116">
    <property type="entry name" value="dUTPase_bact"/>
    <property type="match status" value="1"/>
</dbReference>
<dbReference type="InterPro" id="IPR008181">
    <property type="entry name" value="dUTPase"/>
</dbReference>
<dbReference type="InterPro" id="IPR029054">
    <property type="entry name" value="dUTPase-like"/>
</dbReference>
<dbReference type="InterPro" id="IPR036157">
    <property type="entry name" value="dUTPase-like_sf"/>
</dbReference>
<dbReference type="InterPro" id="IPR033704">
    <property type="entry name" value="dUTPase_trimeric"/>
</dbReference>
<dbReference type="NCBIfam" id="TIGR00576">
    <property type="entry name" value="dut"/>
    <property type="match status" value="1"/>
</dbReference>
<dbReference type="NCBIfam" id="NF001862">
    <property type="entry name" value="PRK00601.1"/>
    <property type="match status" value="1"/>
</dbReference>
<dbReference type="PANTHER" id="PTHR11241">
    <property type="entry name" value="DEOXYURIDINE 5'-TRIPHOSPHATE NUCLEOTIDOHYDROLASE"/>
    <property type="match status" value="1"/>
</dbReference>
<dbReference type="PANTHER" id="PTHR11241:SF0">
    <property type="entry name" value="DEOXYURIDINE 5'-TRIPHOSPHATE NUCLEOTIDOHYDROLASE"/>
    <property type="match status" value="1"/>
</dbReference>
<dbReference type="Pfam" id="PF00692">
    <property type="entry name" value="dUTPase"/>
    <property type="match status" value="1"/>
</dbReference>
<dbReference type="SUPFAM" id="SSF51283">
    <property type="entry name" value="dUTPase-like"/>
    <property type="match status" value="1"/>
</dbReference>
<accession>A1T7Y0</accession>
<organism>
    <name type="scientific">Mycolicibacterium vanbaalenii (strain DSM 7251 / JCM 13017 / BCRC 16820 / KCTC 9966 / NRRL B-24157 / PYR-1)</name>
    <name type="common">Mycobacterium vanbaalenii</name>
    <dbReference type="NCBI Taxonomy" id="350058"/>
    <lineage>
        <taxon>Bacteria</taxon>
        <taxon>Bacillati</taxon>
        <taxon>Actinomycetota</taxon>
        <taxon>Actinomycetes</taxon>
        <taxon>Mycobacteriales</taxon>
        <taxon>Mycobacteriaceae</taxon>
        <taxon>Mycolicibacterium</taxon>
    </lineage>
</organism>